<feature type="signal peptide" evidence="2">
    <location>
        <begin position="1"/>
        <end position="14"/>
    </location>
</feature>
<feature type="chain" id="PRO_0000394916" description="Probable alpha/beta-glucosidase agdC">
    <location>
        <begin position="15"/>
        <end position="881"/>
    </location>
</feature>
<feature type="region of interest" description="Disordered" evidence="4">
    <location>
        <begin position="440"/>
        <end position="485"/>
    </location>
</feature>
<feature type="compositionally biased region" description="Pro residues" evidence="4">
    <location>
        <begin position="448"/>
        <end position="463"/>
    </location>
</feature>
<feature type="active site" description="Nucleophile" evidence="3">
    <location>
        <position position="422"/>
    </location>
</feature>
<feature type="active site" evidence="1">
    <location>
        <position position="425"/>
    </location>
</feature>
<feature type="active site" description="Proton donor" evidence="1">
    <location>
        <position position="571"/>
    </location>
</feature>
<feature type="glycosylation site" description="N-linked (GlcNAc...) asparagine" evidence="2">
    <location>
        <position position="171"/>
    </location>
</feature>
<feature type="glycosylation site" description="N-linked (GlcNAc...) asparagine" evidence="2">
    <location>
        <position position="293"/>
    </location>
</feature>
<feature type="glycosylation site" description="N-linked (GlcNAc...) asparagine" evidence="2">
    <location>
        <position position="373"/>
    </location>
</feature>
<feature type="glycosylation site" description="N-linked (GlcNAc...) asparagine" evidence="2">
    <location>
        <position position="506"/>
    </location>
</feature>
<feature type="glycosylation site" description="N-linked (GlcNAc...) asparagine" evidence="2">
    <location>
        <position position="572"/>
    </location>
</feature>
<feature type="glycosylation site" description="N-linked (GlcNAc...) asparagine" evidence="2">
    <location>
        <position position="608"/>
    </location>
</feature>
<feature type="glycosylation site" description="N-linked (GlcNAc...) asparagine" evidence="2">
    <location>
        <position position="742"/>
    </location>
</feature>
<dbReference type="EC" id="3.2.1.20"/>
<dbReference type="EC" id="3.2.1.21"/>
<dbReference type="EMBL" id="AAHF01000004">
    <property type="protein sequence ID" value="EAL90953.1"/>
    <property type="molecule type" value="Genomic_DNA"/>
</dbReference>
<dbReference type="RefSeq" id="XP_752991.1">
    <property type="nucleotide sequence ID" value="XM_747898.1"/>
</dbReference>
<dbReference type="SMR" id="Q4WRH9"/>
<dbReference type="STRING" id="330879.Q4WRH9"/>
<dbReference type="GlyCosmos" id="Q4WRH9">
    <property type="glycosylation" value="7 sites, No reported glycans"/>
</dbReference>
<dbReference type="EnsemblFungi" id="EAL90953">
    <property type="protein sequence ID" value="EAL90953"/>
    <property type="gene ID" value="AFUA_1G16250"/>
</dbReference>
<dbReference type="GeneID" id="3510016"/>
<dbReference type="KEGG" id="afm:AFUA_1G16250"/>
<dbReference type="VEuPathDB" id="FungiDB:Afu1g16250"/>
<dbReference type="eggNOG" id="KOG1065">
    <property type="taxonomic scope" value="Eukaryota"/>
</dbReference>
<dbReference type="HOGENOM" id="CLU_000631_11_0_1"/>
<dbReference type="InParanoid" id="Q4WRH9"/>
<dbReference type="OMA" id="YKGAVWP"/>
<dbReference type="OrthoDB" id="5839090at2759"/>
<dbReference type="Proteomes" id="UP000002530">
    <property type="component" value="Chromosome 1"/>
</dbReference>
<dbReference type="GO" id="GO:0005576">
    <property type="term" value="C:extracellular region"/>
    <property type="evidence" value="ECO:0007669"/>
    <property type="project" value="UniProtKB-SubCell"/>
</dbReference>
<dbReference type="GO" id="GO:0004558">
    <property type="term" value="F:alpha-1,4-glucosidase activity"/>
    <property type="evidence" value="ECO:0007669"/>
    <property type="project" value="UniProtKB-EC"/>
</dbReference>
<dbReference type="GO" id="GO:0008422">
    <property type="term" value="F:beta-glucosidase activity"/>
    <property type="evidence" value="ECO:0007669"/>
    <property type="project" value="UniProtKB-EC"/>
</dbReference>
<dbReference type="GO" id="GO:0030246">
    <property type="term" value="F:carbohydrate binding"/>
    <property type="evidence" value="ECO:0007669"/>
    <property type="project" value="InterPro"/>
</dbReference>
<dbReference type="GO" id="GO:0004553">
    <property type="term" value="F:hydrolase activity, hydrolyzing O-glycosyl compounds"/>
    <property type="evidence" value="ECO:0000318"/>
    <property type="project" value="GO_Central"/>
</dbReference>
<dbReference type="GO" id="GO:0071555">
    <property type="term" value="P:cell wall organization"/>
    <property type="evidence" value="ECO:0007669"/>
    <property type="project" value="UniProtKB-KW"/>
</dbReference>
<dbReference type="GO" id="GO:0000272">
    <property type="term" value="P:polysaccharide catabolic process"/>
    <property type="evidence" value="ECO:0007669"/>
    <property type="project" value="UniProtKB-KW"/>
</dbReference>
<dbReference type="CDD" id="cd06602">
    <property type="entry name" value="GH31_MGAM_SI_GAA"/>
    <property type="match status" value="1"/>
</dbReference>
<dbReference type="CDD" id="cd14752">
    <property type="entry name" value="GH31_N"/>
    <property type="match status" value="1"/>
</dbReference>
<dbReference type="Gene3D" id="3.20.20.80">
    <property type="entry name" value="Glycosidases"/>
    <property type="match status" value="1"/>
</dbReference>
<dbReference type="Gene3D" id="2.60.40.1760">
    <property type="entry name" value="glycosyl hydrolase (family 31)"/>
    <property type="match status" value="1"/>
</dbReference>
<dbReference type="Gene3D" id="2.60.40.1180">
    <property type="entry name" value="Golgi alpha-mannosidase II"/>
    <property type="match status" value="2"/>
</dbReference>
<dbReference type="InterPro" id="IPR011013">
    <property type="entry name" value="Gal_mutarotase_sf_dom"/>
</dbReference>
<dbReference type="InterPro" id="IPR030458">
    <property type="entry name" value="Glyco_hydro_31_AS"/>
</dbReference>
<dbReference type="InterPro" id="IPR048395">
    <property type="entry name" value="Glyco_hydro_31_C"/>
</dbReference>
<dbReference type="InterPro" id="IPR025887">
    <property type="entry name" value="Glyco_hydro_31_N_dom"/>
</dbReference>
<dbReference type="InterPro" id="IPR000322">
    <property type="entry name" value="Glyco_hydro_31_TIM"/>
</dbReference>
<dbReference type="InterPro" id="IPR013780">
    <property type="entry name" value="Glyco_hydro_b"/>
</dbReference>
<dbReference type="InterPro" id="IPR017853">
    <property type="entry name" value="Glycoside_hydrolase_SF"/>
</dbReference>
<dbReference type="PANTHER" id="PTHR22762">
    <property type="entry name" value="ALPHA-GLUCOSIDASE"/>
    <property type="match status" value="1"/>
</dbReference>
<dbReference type="PANTHER" id="PTHR22762:SF67">
    <property type="entry name" value="ALPHA_BETA-GLUCOSIDASE AGDC-RELATED"/>
    <property type="match status" value="1"/>
</dbReference>
<dbReference type="Pfam" id="PF13802">
    <property type="entry name" value="Gal_mutarotas_2"/>
    <property type="match status" value="1"/>
</dbReference>
<dbReference type="Pfam" id="PF01055">
    <property type="entry name" value="Glyco_hydro_31_2nd"/>
    <property type="match status" value="1"/>
</dbReference>
<dbReference type="Pfam" id="PF21365">
    <property type="entry name" value="Glyco_hydro_31_3rd"/>
    <property type="match status" value="1"/>
</dbReference>
<dbReference type="SUPFAM" id="SSF51445">
    <property type="entry name" value="(Trans)glycosidases"/>
    <property type="match status" value="1"/>
</dbReference>
<dbReference type="SUPFAM" id="SSF74650">
    <property type="entry name" value="Galactose mutarotase-like"/>
    <property type="match status" value="1"/>
</dbReference>
<dbReference type="SUPFAM" id="SSF51011">
    <property type="entry name" value="Glycosyl hydrolase domain"/>
    <property type="match status" value="1"/>
</dbReference>
<dbReference type="PROSITE" id="PS00129">
    <property type="entry name" value="GLYCOSYL_HYDROL_F31_1"/>
    <property type="match status" value="1"/>
</dbReference>
<organism>
    <name type="scientific">Aspergillus fumigatus (strain ATCC MYA-4609 / CBS 101355 / FGSC A1100 / Af293)</name>
    <name type="common">Neosartorya fumigata</name>
    <dbReference type="NCBI Taxonomy" id="330879"/>
    <lineage>
        <taxon>Eukaryota</taxon>
        <taxon>Fungi</taxon>
        <taxon>Dikarya</taxon>
        <taxon>Ascomycota</taxon>
        <taxon>Pezizomycotina</taxon>
        <taxon>Eurotiomycetes</taxon>
        <taxon>Eurotiomycetidae</taxon>
        <taxon>Eurotiales</taxon>
        <taxon>Aspergillaceae</taxon>
        <taxon>Aspergillus</taxon>
        <taxon>Aspergillus subgen. Fumigati</taxon>
    </lineage>
</organism>
<gene>
    <name type="primary">agdC</name>
    <name type="ORF">AFUA_1G16250</name>
</gene>
<name>AGDC_ASPFU</name>
<evidence type="ECO:0000250" key="1"/>
<evidence type="ECO:0000255" key="2"/>
<evidence type="ECO:0000255" key="3">
    <source>
        <dbReference type="PROSITE-ProRule" id="PRU10066"/>
    </source>
</evidence>
<evidence type="ECO:0000256" key="4">
    <source>
        <dbReference type="SAM" id="MobiDB-lite"/>
    </source>
</evidence>
<evidence type="ECO:0000305" key="5"/>
<accession>Q4WRH9</accession>
<protein>
    <recommendedName>
        <fullName>Probable alpha/beta-glucosidase agdC</fullName>
        <ecNumber>3.2.1.20</ecNumber>
        <ecNumber>3.2.1.21</ecNumber>
    </recommendedName>
</protein>
<comment type="function">
    <text evidence="1">Glucosidase involved in the degradation of cellulosic biomass. Has both alpha- and beta-glucosidase activity (By similarity).</text>
</comment>
<comment type="catalytic activity">
    <reaction>
        <text>Hydrolysis of terminal, non-reducing (1-&gt;4)-linked alpha-D-glucose residues with release of alpha-D-glucose.</text>
        <dbReference type="EC" id="3.2.1.20"/>
    </reaction>
</comment>
<comment type="catalytic activity">
    <reaction>
        <text>Hydrolysis of terminal, non-reducing beta-D-glucosyl residues with release of beta-D-glucose.</text>
        <dbReference type="EC" id="3.2.1.21"/>
    </reaction>
</comment>
<comment type="subcellular location">
    <subcellularLocation>
        <location evidence="1">Secreted</location>
    </subcellularLocation>
</comment>
<comment type="similarity">
    <text evidence="5">Belongs to the glycosyl hydrolase 31 family.</text>
</comment>
<keyword id="KW-0119">Carbohydrate metabolism</keyword>
<keyword id="KW-0961">Cell wall biogenesis/degradation</keyword>
<keyword id="KW-0325">Glycoprotein</keyword>
<keyword id="KW-0326">Glycosidase</keyword>
<keyword id="KW-0378">Hydrolase</keyword>
<keyword id="KW-0624">Polysaccharide degradation</keyword>
<keyword id="KW-1185">Reference proteome</keyword>
<keyword id="KW-0964">Secreted</keyword>
<keyword id="KW-0732">Signal</keyword>
<reference key="1">
    <citation type="journal article" date="2005" name="Nature">
        <title>Genomic sequence of the pathogenic and allergenic filamentous fungus Aspergillus fumigatus.</title>
        <authorList>
            <person name="Nierman W.C."/>
            <person name="Pain A."/>
            <person name="Anderson M.J."/>
            <person name="Wortman J.R."/>
            <person name="Kim H.S."/>
            <person name="Arroyo J."/>
            <person name="Berriman M."/>
            <person name="Abe K."/>
            <person name="Archer D.B."/>
            <person name="Bermejo C."/>
            <person name="Bennett J.W."/>
            <person name="Bowyer P."/>
            <person name="Chen D."/>
            <person name="Collins M."/>
            <person name="Coulsen R."/>
            <person name="Davies R."/>
            <person name="Dyer P.S."/>
            <person name="Farman M.L."/>
            <person name="Fedorova N."/>
            <person name="Fedorova N.D."/>
            <person name="Feldblyum T.V."/>
            <person name="Fischer R."/>
            <person name="Fosker N."/>
            <person name="Fraser A."/>
            <person name="Garcia J.L."/>
            <person name="Garcia M.J."/>
            <person name="Goble A."/>
            <person name="Goldman G.H."/>
            <person name="Gomi K."/>
            <person name="Griffith-Jones S."/>
            <person name="Gwilliam R."/>
            <person name="Haas B.J."/>
            <person name="Haas H."/>
            <person name="Harris D.E."/>
            <person name="Horiuchi H."/>
            <person name="Huang J."/>
            <person name="Humphray S."/>
            <person name="Jimenez J."/>
            <person name="Keller N."/>
            <person name="Khouri H."/>
            <person name="Kitamoto K."/>
            <person name="Kobayashi T."/>
            <person name="Konzack S."/>
            <person name="Kulkarni R."/>
            <person name="Kumagai T."/>
            <person name="Lafton A."/>
            <person name="Latge J.-P."/>
            <person name="Li W."/>
            <person name="Lord A."/>
            <person name="Lu C."/>
            <person name="Majoros W.H."/>
            <person name="May G.S."/>
            <person name="Miller B.L."/>
            <person name="Mohamoud Y."/>
            <person name="Molina M."/>
            <person name="Monod M."/>
            <person name="Mouyna I."/>
            <person name="Mulligan S."/>
            <person name="Murphy L.D."/>
            <person name="O'Neil S."/>
            <person name="Paulsen I."/>
            <person name="Penalva M.A."/>
            <person name="Pertea M."/>
            <person name="Price C."/>
            <person name="Pritchard B.L."/>
            <person name="Quail M.A."/>
            <person name="Rabbinowitsch E."/>
            <person name="Rawlins N."/>
            <person name="Rajandream M.A."/>
            <person name="Reichard U."/>
            <person name="Renauld H."/>
            <person name="Robson G.D."/>
            <person name="Rodriguez de Cordoba S."/>
            <person name="Rodriguez-Pena J.M."/>
            <person name="Ronning C.M."/>
            <person name="Rutter S."/>
            <person name="Salzberg S.L."/>
            <person name="Sanchez M."/>
            <person name="Sanchez-Ferrero J.C."/>
            <person name="Saunders D."/>
            <person name="Seeger K."/>
            <person name="Squares R."/>
            <person name="Squares S."/>
            <person name="Takeuchi M."/>
            <person name="Tekaia F."/>
            <person name="Turner G."/>
            <person name="Vazquez de Aldana C.R."/>
            <person name="Weidman J."/>
            <person name="White O."/>
            <person name="Woodward J.R."/>
            <person name="Yu J.-H."/>
            <person name="Fraser C.M."/>
            <person name="Galagan J.E."/>
            <person name="Asai K."/>
            <person name="Machida M."/>
            <person name="Hall N."/>
            <person name="Barrell B.G."/>
            <person name="Denning D.W."/>
        </authorList>
    </citation>
    <scope>NUCLEOTIDE SEQUENCE [LARGE SCALE GENOMIC DNA]</scope>
    <source>
        <strain>ATCC MYA-4609 / CBS 101355 / FGSC A1100 / Af293</strain>
    </source>
</reference>
<sequence length="881" mass="98888">MLRSLLLLAPLVGAAVIGARDHSQECPGYKATNIREGRDSLTADLTLAGKPCNTYGTDLKNLKLLVEYQTDKRLHVKIYDADEEVYQVPESVLPRVDGKGGSSKKSALKFDYQANPFSFKVKRGGEVLFDTSGSNLIFQSQYLSLRTWLPEDPNLYGLGEHTDSLRLETTNYTRTLWNRDAYAIPEKTNLYGTHPVYYDHRGQHGTHGVFLLNSNGMDIKIDKTKDGKQYLEYNTLGGVFDFYFFTGATPKDASIEYAKVVGLPAMQSYWTFGFHQCRYGYRDVFEVAEVVYNYSQAKIPLETMWTDIDYMDRRRVFTLDPERFPLEKMRELVSYLHNHNQHYIVMVDPAVSVSDNVGYNDGMEQGIFLQTQNGSLYKGAVWPGVTAYPDWFHPDIQKYWNDQFAKFFDPKTGVDIDGLWIDMNEAANFCPYPCSDPEGYARDNDLPPAAPPVRPSNPRPLPGFPGDFQPSSSSKRSTKGSKVGLPNRDLINPPYMIRNEAGSLSNKTINTDIIHAGEGYAEYDTHNLYGTMMSSASRNAMQHRRPGVRPLVITRSTYAGAGAHVGHWLGDNISEWSKYRISISQMLAFASMFQVPMIGSDVCGFGGNTTEELCARWARLGAFYTFFRNHNEITGIPQEFYRWPTVAESARKAIDIRYRLLDYIYTAFHRQTQTGEPFLQPMFYLYPKDKNTFSNQLQFFYGDAILVSPVTDGSQTSVDAYFPDDIFYDWHTGAALRGRGANVTLSNIDVTEIPIHIRGGSIIPVRSESAMTTTELRKKGFELIIAPGLDGTASGSLYLDDGDSIEPRATLELEFTYRKGHLQVKGKFGFRTEVKINAVTLLGQSAPASKSADVASLDSGRQAVTIKTSLDLTGPSEIDLS</sequence>
<proteinExistence type="inferred from homology"/>